<comment type="function">
    <text evidence="1">Probable organic anion transporter which may serve as a transporter for some non-steroidal anti-inflammatory drugs (NSAIDs) as well as other organic anions across the luminal membranes of renal proximal tubules at the final excretion step into the urine.</text>
</comment>
<comment type="subcellular location">
    <subcellularLocation>
        <location evidence="2">Nucleus inner membrane</location>
        <topology evidence="3">Multi-pass membrane protein</topology>
    </subcellularLocation>
    <subcellularLocation>
        <location evidence="1">Cell membrane</location>
        <topology evidence="3">Multi-pass membrane protein</topology>
    </subcellularLocation>
</comment>
<comment type="similarity">
    <text evidence="3">Belongs to the major facilitator superfamily.</text>
</comment>
<name>MFS10_BOVIN</name>
<reference evidence="4" key="1">
    <citation type="submission" date="2006-08" db="EMBL/GenBank/DDBJ databases">
        <authorList>
            <consortium name="NIH - Mammalian Gene Collection (MGC) project"/>
        </authorList>
    </citation>
    <scope>NUCLEOTIDE SEQUENCE [LARGE SCALE MRNA]</scope>
    <source>
        <strain evidence="4">Hereford</strain>
        <tissue evidence="4">Thalamus</tissue>
    </source>
</reference>
<proteinExistence type="evidence at transcript level"/>
<protein>
    <recommendedName>
        <fullName>Major facilitator superfamily domain-containing protein 10</fullName>
    </recommendedName>
    <alternativeName>
        <fullName>Tetracycline transporter-like protein</fullName>
    </alternativeName>
</protein>
<keyword id="KW-0053">Apoptosis</keyword>
<keyword id="KW-1003">Cell membrane</keyword>
<keyword id="KW-0472">Membrane</keyword>
<keyword id="KW-0539">Nucleus</keyword>
<keyword id="KW-1185">Reference proteome</keyword>
<keyword id="KW-0812">Transmembrane</keyword>
<keyword id="KW-1133">Transmembrane helix</keyword>
<keyword id="KW-0813">Transport</keyword>
<evidence type="ECO:0000250" key="1">
    <source>
        <dbReference type="UniProtKB" id="Q14728"/>
    </source>
</evidence>
<evidence type="ECO:0000250" key="2">
    <source>
        <dbReference type="UniProtKB" id="Q9D2V8"/>
    </source>
</evidence>
<evidence type="ECO:0000255" key="3"/>
<evidence type="ECO:0000312" key="4">
    <source>
        <dbReference type="EMBL" id="AAI19846.1"/>
    </source>
</evidence>
<organism>
    <name type="scientific">Bos taurus</name>
    <name type="common">Bovine</name>
    <dbReference type="NCBI Taxonomy" id="9913"/>
    <lineage>
        <taxon>Eukaryota</taxon>
        <taxon>Metazoa</taxon>
        <taxon>Chordata</taxon>
        <taxon>Craniata</taxon>
        <taxon>Vertebrata</taxon>
        <taxon>Euteleostomi</taxon>
        <taxon>Mammalia</taxon>
        <taxon>Eutheria</taxon>
        <taxon>Laurasiatheria</taxon>
        <taxon>Artiodactyla</taxon>
        <taxon>Ruminantia</taxon>
        <taxon>Pecora</taxon>
        <taxon>Bovidae</taxon>
        <taxon>Bovinae</taxon>
        <taxon>Bos</taxon>
    </lineage>
</organism>
<sequence>MGCGAGGSCTPRPPIRQQQAPETRVVAVVFLGLLLDLLAFTLLLPLLPGLLESHGRAHDPLYGSWQRGVDWFAAAIGMPAEKRYNSVLFGGLIGSVFSLLQFLSAPLTGALSDCLGRRPGMLLSLAGVATSYAVWAASKSFAAFLASRVIGGISKGNVSLCTAIVADLGSPSARSKGMAVIGVAFSLGFTLGPTLGAFLPSETVPWLALLFAVSDLLFIWCFLPETLPPEKRAPSVTLGFRAAADLLSPLALLRFSAVARGPDPPTGVRLGSLRGLGLVYFLYLFLFSGLEFTLSFLVHQRFRFSRVEQGKMFFFIGLTMATIQGAYARRIRPGREIAAVKQAILLLIPASLFVGWGHTLPILGLGLLLYSWAAAVVVPCLSSVVAGYGSPGQKGTVMGTLRSLGALARAVGPVVAASAYWLAGARVCYTVCAALFLLPFSILRTLSPPARTLKAE</sequence>
<accession>Q0P5M9</accession>
<gene>
    <name type="primary">MFSD10</name>
    <name type="synonym">TETRAN</name>
</gene>
<feature type="chain" id="PRO_0000324657" description="Major facilitator superfamily domain-containing protein 10">
    <location>
        <begin position="1"/>
        <end position="456"/>
    </location>
</feature>
<feature type="transmembrane region" description="Helical" evidence="3">
    <location>
        <begin position="25"/>
        <end position="45"/>
    </location>
</feature>
<feature type="transmembrane region" description="Helical" evidence="3">
    <location>
        <begin position="87"/>
        <end position="107"/>
    </location>
</feature>
<feature type="transmembrane region" description="Helical" evidence="3">
    <location>
        <begin position="125"/>
        <end position="145"/>
    </location>
</feature>
<feature type="transmembrane region" description="Helical" evidence="3">
    <location>
        <begin position="149"/>
        <end position="169"/>
    </location>
</feature>
<feature type="transmembrane region" description="Helical" evidence="3">
    <location>
        <begin position="179"/>
        <end position="199"/>
    </location>
</feature>
<feature type="transmembrane region" description="Helical" evidence="3">
    <location>
        <begin position="204"/>
        <end position="224"/>
    </location>
</feature>
<feature type="transmembrane region" description="Helical" evidence="3">
    <location>
        <begin position="278"/>
        <end position="298"/>
    </location>
</feature>
<feature type="transmembrane region" description="Helical" evidence="3">
    <location>
        <begin position="311"/>
        <end position="328"/>
    </location>
</feature>
<feature type="transmembrane region" description="Helical" evidence="3">
    <location>
        <begin position="343"/>
        <end position="363"/>
    </location>
</feature>
<feature type="transmembrane region" description="Helical" evidence="3">
    <location>
        <begin position="365"/>
        <end position="385"/>
    </location>
</feature>
<feature type="transmembrane region" description="Helical" evidence="3">
    <location>
        <begin position="422"/>
        <end position="442"/>
    </location>
</feature>
<dbReference type="EMBL" id="BC119845">
    <property type="protein sequence ID" value="AAI19846.1"/>
    <property type="molecule type" value="mRNA"/>
</dbReference>
<dbReference type="RefSeq" id="NP_001068772.1">
    <property type="nucleotide sequence ID" value="NM_001075304.1"/>
</dbReference>
<dbReference type="RefSeq" id="XP_010804632.1">
    <property type="nucleotide sequence ID" value="XM_010806330.2"/>
</dbReference>
<dbReference type="SMR" id="Q0P5M9"/>
<dbReference type="FunCoup" id="Q0P5M9">
    <property type="interactions" value="1358"/>
</dbReference>
<dbReference type="STRING" id="9913.ENSBTAP00000067463"/>
<dbReference type="PaxDb" id="9913-ENSBTAP00000028155"/>
<dbReference type="GeneID" id="507194"/>
<dbReference type="KEGG" id="bta:507194"/>
<dbReference type="CTD" id="10227"/>
<dbReference type="VEuPathDB" id="HostDB:ENSBTAG00000021130"/>
<dbReference type="eggNOG" id="KOG2615">
    <property type="taxonomic scope" value="Eukaryota"/>
</dbReference>
<dbReference type="HOGENOM" id="CLU_001265_10_2_1"/>
<dbReference type="InParanoid" id="Q0P5M9"/>
<dbReference type="OrthoDB" id="196650at2759"/>
<dbReference type="TreeFam" id="TF314512"/>
<dbReference type="Proteomes" id="UP000009136">
    <property type="component" value="Chromosome 6"/>
</dbReference>
<dbReference type="Bgee" id="ENSBTAG00000021130">
    <property type="expression patterns" value="Expressed in thyroid gland and 104 other cell types or tissues"/>
</dbReference>
<dbReference type="GO" id="GO:0031526">
    <property type="term" value="C:brush border membrane"/>
    <property type="evidence" value="ECO:0000318"/>
    <property type="project" value="GO_Central"/>
</dbReference>
<dbReference type="GO" id="GO:0005637">
    <property type="term" value="C:nuclear inner membrane"/>
    <property type="evidence" value="ECO:0000250"/>
    <property type="project" value="UniProtKB"/>
</dbReference>
<dbReference type="GO" id="GO:0022857">
    <property type="term" value="F:transmembrane transporter activity"/>
    <property type="evidence" value="ECO:0007669"/>
    <property type="project" value="InterPro"/>
</dbReference>
<dbReference type="GO" id="GO:0006915">
    <property type="term" value="P:apoptotic process"/>
    <property type="evidence" value="ECO:0007669"/>
    <property type="project" value="UniProtKB-KW"/>
</dbReference>
<dbReference type="FunFam" id="1.20.1250.20:FF:000181">
    <property type="entry name" value="Major facilitator superfamily domain-containing protein 10"/>
    <property type="match status" value="1"/>
</dbReference>
<dbReference type="Gene3D" id="1.20.1250.20">
    <property type="entry name" value="MFS general substrate transporter like domains"/>
    <property type="match status" value="1"/>
</dbReference>
<dbReference type="InterPro" id="IPR011701">
    <property type="entry name" value="MFS"/>
</dbReference>
<dbReference type="InterPro" id="IPR020846">
    <property type="entry name" value="MFS_dom"/>
</dbReference>
<dbReference type="InterPro" id="IPR036259">
    <property type="entry name" value="MFS_trans_sf"/>
</dbReference>
<dbReference type="InterPro" id="IPR005829">
    <property type="entry name" value="Sugar_transporter_CS"/>
</dbReference>
<dbReference type="PANTHER" id="PTHR23504">
    <property type="entry name" value="MAJOR FACILITATOR SUPERFAMILY DOMAIN-CONTAINING PROTEIN 10"/>
    <property type="match status" value="1"/>
</dbReference>
<dbReference type="PANTHER" id="PTHR23504:SF31">
    <property type="entry name" value="MAJOR FACILITATOR SUPERFAMILY DOMAIN-CONTAINING PROTEIN 10"/>
    <property type="match status" value="1"/>
</dbReference>
<dbReference type="Pfam" id="PF07690">
    <property type="entry name" value="MFS_1"/>
    <property type="match status" value="1"/>
</dbReference>
<dbReference type="SUPFAM" id="SSF103473">
    <property type="entry name" value="MFS general substrate transporter"/>
    <property type="match status" value="1"/>
</dbReference>
<dbReference type="PROSITE" id="PS50850">
    <property type="entry name" value="MFS"/>
    <property type="match status" value="1"/>
</dbReference>